<name>APOA4_CANLF</name>
<keyword id="KW-0162">Chylomicron</keyword>
<keyword id="KW-0345">HDL</keyword>
<keyword id="KW-0445">Lipid transport</keyword>
<keyword id="KW-1185">Reference proteome</keyword>
<keyword id="KW-0677">Repeat</keyword>
<keyword id="KW-0964">Secreted</keyword>
<keyword id="KW-0732">Signal</keyword>
<keyword id="KW-0813">Transport</keyword>
<reference key="1">
    <citation type="journal article" date="2005" name="Nature">
        <title>Genome sequence, comparative analysis and haplotype structure of the domestic dog.</title>
        <authorList>
            <person name="Lindblad-Toh K."/>
            <person name="Wade C.M."/>
            <person name="Mikkelsen T.S."/>
            <person name="Karlsson E.K."/>
            <person name="Jaffe D.B."/>
            <person name="Kamal M."/>
            <person name="Clamp M."/>
            <person name="Chang J.L."/>
            <person name="Kulbokas E.J. III"/>
            <person name="Zody M.C."/>
            <person name="Mauceli E."/>
            <person name="Xie X."/>
            <person name="Breen M."/>
            <person name="Wayne R.K."/>
            <person name="Ostrander E.A."/>
            <person name="Ponting C.P."/>
            <person name="Galibert F."/>
            <person name="Smith D.R."/>
            <person name="deJong P.J."/>
            <person name="Kirkness E.F."/>
            <person name="Alvarez P."/>
            <person name="Biagi T."/>
            <person name="Brockman W."/>
            <person name="Butler J."/>
            <person name="Chin C.-W."/>
            <person name="Cook A."/>
            <person name="Cuff J."/>
            <person name="Daly M.J."/>
            <person name="DeCaprio D."/>
            <person name="Gnerre S."/>
            <person name="Grabherr M."/>
            <person name="Kellis M."/>
            <person name="Kleber M."/>
            <person name="Bardeleben C."/>
            <person name="Goodstadt L."/>
            <person name="Heger A."/>
            <person name="Hitte C."/>
            <person name="Kim L."/>
            <person name="Koepfli K.-P."/>
            <person name="Parker H.G."/>
            <person name="Pollinger J.P."/>
            <person name="Searle S.M.J."/>
            <person name="Sutter N.B."/>
            <person name="Thomas R."/>
            <person name="Webber C."/>
            <person name="Baldwin J."/>
            <person name="Abebe A."/>
            <person name="Abouelleil A."/>
            <person name="Aftuck L."/>
            <person name="Ait-Zahra M."/>
            <person name="Aldredge T."/>
            <person name="Allen N."/>
            <person name="An P."/>
            <person name="Anderson S."/>
            <person name="Antoine C."/>
            <person name="Arachchi H."/>
            <person name="Aslam A."/>
            <person name="Ayotte L."/>
            <person name="Bachantsang P."/>
            <person name="Barry A."/>
            <person name="Bayul T."/>
            <person name="Benamara M."/>
            <person name="Berlin A."/>
            <person name="Bessette D."/>
            <person name="Blitshteyn B."/>
            <person name="Bloom T."/>
            <person name="Blye J."/>
            <person name="Boguslavskiy L."/>
            <person name="Bonnet C."/>
            <person name="Boukhgalter B."/>
            <person name="Brown A."/>
            <person name="Cahill P."/>
            <person name="Calixte N."/>
            <person name="Camarata J."/>
            <person name="Cheshatsang Y."/>
            <person name="Chu J."/>
            <person name="Citroen M."/>
            <person name="Collymore A."/>
            <person name="Cooke P."/>
            <person name="Dawoe T."/>
            <person name="Daza R."/>
            <person name="Decktor K."/>
            <person name="DeGray S."/>
            <person name="Dhargay N."/>
            <person name="Dooley K."/>
            <person name="Dooley K."/>
            <person name="Dorje P."/>
            <person name="Dorjee K."/>
            <person name="Dorris L."/>
            <person name="Duffey N."/>
            <person name="Dupes A."/>
            <person name="Egbiremolen O."/>
            <person name="Elong R."/>
            <person name="Falk J."/>
            <person name="Farina A."/>
            <person name="Faro S."/>
            <person name="Ferguson D."/>
            <person name="Ferreira P."/>
            <person name="Fisher S."/>
            <person name="FitzGerald M."/>
            <person name="Foley K."/>
            <person name="Foley C."/>
            <person name="Franke A."/>
            <person name="Friedrich D."/>
            <person name="Gage D."/>
            <person name="Garber M."/>
            <person name="Gearin G."/>
            <person name="Giannoukos G."/>
            <person name="Goode T."/>
            <person name="Goyette A."/>
            <person name="Graham J."/>
            <person name="Grandbois E."/>
            <person name="Gyaltsen K."/>
            <person name="Hafez N."/>
            <person name="Hagopian D."/>
            <person name="Hagos B."/>
            <person name="Hall J."/>
            <person name="Healy C."/>
            <person name="Hegarty R."/>
            <person name="Honan T."/>
            <person name="Horn A."/>
            <person name="Houde N."/>
            <person name="Hughes L."/>
            <person name="Hunnicutt L."/>
            <person name="Husby M."/>
            <person name="Jester B."/>
            <person name="Jones C."/>
            <person name="Kamat A."/>
            <person name="Kanga B."/>
            <person name="Kells C."/>
            <person name="Khazanovich D."/>
            <person name="Kieu A.C."/>
            <person name="Kisner P."/>
            <person name="Kumar M."/>
            <person name="Lance K."/>
            <person name="Landers T."/>
            <person name="Lara M."/>
            <person name="Lee W."/>
            <person name="Leger J.-P."/>
            <person name="Lennon N."/>
            <person name="Leuper L."/>
            <person name="LeVine S."/>
            <person name="Liu J."/>
            <person name="Liu X."/>
            <person name="Lokyitsang Y."/>
            <person name="Lokyitsang T."/>
            <person name="Lui A."/>
            <person name="Macdonald J."/>
            <person name="Major J."/>
            <person name="Marabella R."/>
            <person name="Maru K."/>
            <person name="Matthews C."/>
            <person name="McDonough S."/>
            <person name="Mehta T."/>
            <person name="Meldrim J."/>
            <person name="Melnikov A."/>
            <person name="Meneus L."/>
            <person name="Mihalev A."/>
            <person name="Mihova T."/>
            <person name="Miller K."/>
            <person name="Mittelman R."/>
            <person name="Mlenga V."/>
            <person name="Mulrain L."/>
            <person name="Munson G."/>
            <person name="Navidi A."/>
            <person name="Naylor J."/>
            <person name="Nguyen T."/>
            <person name="Nguyen N."/>
            <person name="Nguyen C."/>
            <person name="Nguyen T."/>
            <person name="Nicol R."/>
            <person name="Norbu N."/>
            <person name="Norbu C."/>
            <person name="Novod N."/>
            <person name="Nyima T."/>
            <person name="Olandt P."/>
            <person name="O'Neill B."/>
            <person name="O'Neill K."/>
            <person name="Osman S."/>
            <person name="Oyono L."/>
            <person name="Patti C."/>
            <person name="Perrin D."/>
            <person name="Phunkhang P."/>
            <person name="Pierre F."/>
            <person name="Priest M."/>
            <person name="Rachupka A."/>
            <person name="Raghuraman S."/>
            <person name="Rameau R."/>
            <person name="Ray V."/>
            <person name="Raymond C."/>
            <person name="Rege F."/>
            <person name="Rise C."/>
            <person name="Rogers J."/>
            <person name="Rogov P."/>
            <person name="Sahalie J."/>
            <person name="Settipalli S."/>
            <person name="Sharpe T."/>
            <person name="Shea T."/>
            <person name="Sheehan M."/>
            <person name="Sherpa N."/>
            <person name="Shi J."/>
            <person name="Shih D."/>
            <person name="Sloan J."/>
            <person name="Smith C."/>
            <person name="Sparrow T."/>
            <person name="Stalker J."/>
            <person name="Stange-Thomann N."/>
            <person name="Stavropoulos S."/>
            <person name="Stone C."/>
            <person name="Stone S."/>
            <person name="Sykes S."/>
            <person name="Tchuinga P."/>
            <person name="Tenzing P."/>
            <person name="Tesfaye S."/>
            <person name="Thoulutsang D."/>
            <person name="Thoulutsang Y."/>
            <person name="Topham K."/>
            <person name="Topping I."/>
            <person name="Tsamla T."/>
            <person name="Vassiliev H."/>
            <person name="Venkataraman V."/>
            <person name="Vo A."/>
            <person name="Wangchuk T."/>
            <person name="Wangdi T."/>
            <person name="Weiand M."/>
            <person name="Wilkinson J."/>
            <person name="Wilson A."/>
            <person name="Yadav S."/>
            <person name="Yang S."/>
            <person name="Yang X."/>
            <person name="Young G."/>
            <person name="Yu Q."/>
            <person name="Zainoun J."/>
            <person name="Zembek L."/>
            <person name="Zimmer A."/>
            <person name="Lander E.S."/>
        </authorList>
    </citation>
    <scope>NUCLEOTIDE SEQUENCE [LARGE SCALE GENOMIC DNA]</scope>
    <source>
        <strain evidence="5">Boxer</strain>
    </source>
</reference>
<reference key="2">
    <citation type="unpublished observations" date="2014-08">
        <authorList>
            <person name="Puppione D.L."/>
        </authorList>
    </citation>
    <scope>IDENTIFICATION</scope>
</reference>
<sequence length="378" mass="42536">MFLKAVVLTLSLVAITGARAEVSADQVATVVWDYFSQLSNNAKEAVEHLQQSELTQQLKSVTKGHISALRVIEKGRERNSWEHSRRVGPCEIMGRQVGIFGQPLRVATLPNCDLPVNSVPPNTHLSQAVGPYAEELRTQVNTHAEQLRNQLTSHAQRMQSALRQNVDDLHSSLTPFADELKAKIDQNVEELKGHLTPYTDELKVKIDQNVEELRRSLAPYAQDVQEKLNHQLEGLAFQMKKNAEELKAKISANAEELRQRLAPVAEDVRGKLKDNTAGLHKSLAELSSRLDQQVEEFRRNVGPYGETFNKALLQQVEELRQKLGPYAGDMEDHLSFLEKDLRDKVNSFFSTLQEKESQDTPVALPKQEQEQSAVPLES</sequence>
<feature type="signal peptide" evidence="2">
    <location>
        <begin position="1"/>
        <end position="20"/>
    </location>
</feature>
<feature type="chain" id="PRO_0000430569" description="Apolipoprotein A-IV">
    <location>
        <begin position="21"/>
        <end position="378"/>
    </location>
</feature>
<feature type="repeat" description="1">
    <location>
        <begin position="33"/>
        <end position="54"/>
    </location>
</feature>
<feature type="repeat" description="2">
    <location>
        <begin position="60"/>
        <end position="81"/>
    </location>
</feature>
<feature type="repeat" description="3">
    <location>
        <begin position="82"/>
        <end position="98"/>
    </location>
</feature>
<feature type="repeat" description="4">
    <location>
        <begin position="110"/>
        <end position="130"/>
    </location>
</feature>
<feature type="repeat" description="5">
    <location>
        <begin position="131"/>
        <end position="152"/>
    </location>
</feature>
<feature type="repeat" description="6">
    <location>
        <begin position="153"/>
        <end position="174"/>
    </location>
</feature>
<feature type="repeat" description="7">
    <location>
        <begin position="175"/>
        <end position="196"/>
    </location>
</feature>
<feature type="repeat" description="8">
    <location>
        <begin position="197"/>
        <end position="218"/>
    </location>
</feature>
<feature type="repeat" description="9">
    <location>
        <begin position="219"/>
        <end position="240"/>
    </location>
</feature>
<feature type="repeat" description="10">
    <location>
        <begin position="241"/>
        <end position="262"/>
    </location>
</feature>
<feature type="repeat" description="11">
    <location>
        <begin position="263"/>
        <end position="280"/>
    </location>
</feature>
<feature type="repeat" description="12">
    <location>
        <begin position="281"/>
        <end position="302"/>
    </location>
</feature>
<feature type="repeat" description="13">
    <location>
        <begin position="303"/>
        <end position="324"/>
    </location>
</feature>
<feature type="region of interest" description="13 X 22 AA approximate tandem repeats">
    <location>
        <begin position="33"/>
        <end position="324"/>
    </location>
</feature>
<feature type="region of interest" description="Disordered" evidence="3">
    <location>
        <begin position="354"/>
        <end position="378"/>
    </location>
</feature>
<proteinExistence type="inferred from homology"/>
<dbReference type="EMBL" id="AAEX03003469">
    <property type="status" value="NOT_ANNOTATED_CDS"/>
    <property type="molecule type" value="Genomic_DNA"/>
</dbReference>
<dbReference type="SMR" id="E2RE76"/>
<dbReference type="FunCoup" id="E2RE76">
    <property type="interactions" value="10"/>
</dbReference>
<dbReference type="PaxDb" id="9612-ENSCAFP00000019615"/>
<dbReference type="eggNOG" id="ENOG502QSC5">
    <property type="taxonomic scope" value="Eukaryota"/>
</dbReference>
<dbReference type="HOGENOM" id="CLU_058447_0_0_1"/>
<dbReference type="InParanoid" id="E2RE76"/>
<dbReference type="OMA" id="QAKMSPY"/>
<dbReference type="OrthoDB" id="9886755at2759"/>
<dbReference type="TreeFam" id="TF334458"/>
<dbReference type="Proteomes" id="UP000002254">
    <property type="component" value="Unplaced"/>
</dbReference>
<dbReference type="Proteomes" id="UP000694429">
    <property type="component" value="Unplaced"/>
</dbReference>
<dbReference type="Proteomes" id="UP000694542">
    <property type="component" value="Unplaced"/>
</dbReference>
<dbReference type="Proteomes" id="UP000805418">
    <property type="component" value="Unplaced"/>
</dbReference>
<dbReference type="GO" id="GO:0042627">
    <property type="term" value="C:chylomicron"/>
    <property type="evidence" value="ECO:0000318"/>
    <property type="project" value="GO_Central"/>
</dbReference>
<dbReference type="GO" id="GO:1903561">
    <property type="term" value="C:extracellular vesicle"/>
    <property type="evidence" value="ECO:0000318"/>
    <property type="project" value="GO_Central"/>
</dbReference>
<dbReference type="GO" id="GO:0034364">
    <property type="term" value="C:high-density lipoprotein particle"/>
    <property type="evidence" value="ECO:0000318"/>
    <property type="project" value="GO_Central"/>
</dbReference>
<dbReference type="GO" id="GO:0034362">
    <property type="term" value="C:low-density lipoprotein particle"/>
    <property type="evidence" value="ECO:0000318"/>
    <property type="project" value="GO_Central"/>
</dbReference>
<dbReference type="GO" id="GO:0034361">
    <property type="term" value="C:very-low-density lipoprotein particle"/>
    <property type="evidence" value="ECO:0000318"/>
    <property type="project" value="GO_Central"/>
</dbReference>
<dbReference type="GO" id="GO:0120020">
    <property type="term" value="F:cholesterol transfer activity"/>
    <property type="evidence" value="ECO:0000318"/>
    <property type="project" value="GO_Central"/>
</dbReference>
<dbReference type="GO" id="GO:0060228">
    <property type="term" value="F:phosphatidylcholine-sterol O-acyltransferase activator activity"/>
    <property type="evidence" value="ECO:0000318"/>
    <property type="project" value="GO_Central"/>
</dbReference>
<dbReference type="GO" id="GO:0005543">
    <property type="term" value="F:phospholipid binding"/>
    <property type="evidence" value="ECO:0000318"/>
    <property type="project" value="GO_Central"/>
</dbReference>
<dbReference type="GO" id="GO:0055090">
    <property type="term" value="P:acylglycerol homeostasis"/>
    <property type="evidence" value="ECO:0000318"/>
    <property type="project" value="GO_Central"/>
</dbReference>
<dbReference type="GO" id="GO:0033344">
    <property type="term" value="P:cholesterol efflux"/>
    <property type="evidence" value="ECO:0000318"/>
    <property type="project" value="GO_Central"/>
</dbReference>
<dbReference type="GO" id="GO:0008203">
    <property type="term" value="P:cholesterol metabolic process"/>
    <property type="evidence" value="ECO:0000318"/>
    <property type="project" value="GO_Central"/>
</dbReference>
<dbReference type="GO" id="GO:0042157">
    <property type="term" value="P:lipoprotein metabolic process"/>
    <property type="evidence" value="ECO:0007669"/>
    <property type="project" value="InterPro"/>
</dbReference>
<dbReference type="GO" id="GO:0033700">
    <property type="term" value="P:phospholipid efflux"/>
    <property type="evidence" value="ECO:0000318"/>
    <property type="project" value="GO_Central"/>
</dbReference>
<dbReference type="FunFam" id="1.20.120.20:FF:000005">
    <property type="entry name" value="Apolipoprotein A-IV"/>
    <property type="match status" value="1"/>
</dbReference>
<dbReference type="Gene3D" id="6.10.250.2890">
    <property type="match status" value="1"/>
</dbReference>
<dbReference type="Gene3D" id="1.20.120.20">
    <property type="entry name" value="Apolipoprotein"/>
    <property type="match status" value="2"/>
</dbReference>
<dbReference type="InterPro" id="IPR000074">
    <property type="entry name" value="ApoA_E"/>
</dbReference>
<dbReference type="InterPro" id="IPR050163">
    <property type="entry name" value="Apolipoprotein_A1/A4/E"/>
</dbReference>
<dbReference type="PANTHER" id="PTHR18976">
    <property type="entry name" value="APOLIPOPROTEIN"/>
    <property type="match status" value="1"/>
</dbReference>
<dbReference type="PANTHER" id="PTHR18976:SF1">
    <property type="entry name" value="APOLIPOPROTEIN A-IV"/>
    <property type="match status" value="1"/>
</dbReference>
<dbReference type="Pfam" id="PF01442">
    <property type="entry name" value="Apolipoprotein"/>
    <property type="match status" value="1"/>
</dbReference>
<dbReference type="SUPFAM" id="SSF47162">
    <property type="entry name" value="Apolipoprotein"/>
    <property type="match status" value="2"/>
</dbReference>
<dbReference type="SUPFAM" id="SSF58113">
    <property type="entry name" value="Apolipoprotein A-I"/>
    <property type="match status" value="1"/>
</dbReference>
<accession>E2RE76</accession>
<comment type="function">
    <text evidence="1">May have a role in chylomicrons and VLDL secretion and catabolism. Required for efficient activation of lipoprotein lipase by ApoC-II; potent activator of LCAT. Apoa-IV is a major component of HDL and chylomicrons.</text>
</comment>
<comment type="subunit">
    <text evidence="1">Homodimer.</text>
</comment>
<comment type="subcellular location">
    <subcellularLocation>
        <location evidence="1">Secreted</location>
    </subcellularLocation>
</comment>
<comment type="domain">
    <text evidence="1">Nine of the thirteen 22-amino acid tandem repeats (each 22-mer is actually a tandem array of two, A and B, related 11-mers) occurring in this sequence are predicted to be highly alpha-helical, and many of these helices are amphipathic. They may therefore serve as lipid-binding domains with lecithin:cholesterol acyltransferase (LCAT) activating abilities.</text>
</comment>
<comment type="similarity">
    <text evidence="4">Belongs to the apolipoprotein A1/A4/E family.</text>
</comment>
<gene>
    <name evidence="1" type="primary">APOA4</name>
</gene>
<evidence type="ECO:0000250" key="1">
    <source>
        <dbReference type="UniProtKB" id="P06727"/>
    </source>
</evidence>
<evidence type="ECO:0000255" key="2"/>
<evidence type="ECO:0000256" key="3">
    <source>
        <dbReference type="SAM" id="MobiDB-lite"/>
    </source>
</evidence>
<evidence type="ECO:0000305" key="4"/>
<evidence type="ECO:0000312" key="5">
    <source>
        <dbReference type="EMBL" id="AAEX03003469"/>
    </source>
</evidence>
<organism evidence="5">
    <name type="scientific">Canis lupus familiaris</name>
    <name type="common">Dog</name>
    <name type="synonym">Canis familiaris</name>
    <dbReference type="NCBI Taxonomy" id="9615"/>
    <lineage>
        <taxon>Eukaryota</taxon>
        <taxon>Metazoa</taxon>
        <taxon>Chordata</taxon>
        <taxon>Craniata</taxon>
        <taxon>Vertebrata</taxon>
        <taxon>Euteleostomi</taxon>
        <taxon>Mammalia</taxon>
        <taxon>Eutheria</taxon>
        <taxon>Laurasiatheria</taxon>
        <taxon>Carnivora</taxon>
        <taxon>Caniformia</taxon>
        <taxon>Canidae</taxon>
        <taxon>Canis</taxon>
    </lineage>
</organism>
<protein>
    <recommendedName>
        <fullName evidence="1">Apolipoprotein A-IV</fullName>
        <shortName>Apo-AIV</shortName>
        <shortName>ApoA-IV</shortName>
    </recommendedName>
    <alternativeName>
        <fullName evidence="1">Apolipoprotein A4</fullName>
    </alternativeName>
</protein>